<sequence length="820" mass="93354">MDGEGFGELLQQAEQLAAETEGVTELPHVERNLQEIQQAGERLRSKTMTRTSQESANVKASVLLGSRGLDISHISQRLESLSAATTFEPLEPVKDTDIQGFLKNEKDNALLSAIEESRKRTFVMAEEYHRESMLVEWEQVKQRVLHTLLASGEDALDFTQESETSYISESGAPGRSSLDNVEMAYARQIYMYNEKVVSGHLQPSLVELCTEAAERLDDKNVSDLWVMVKQMTDVPLIPASDSLKSRCSVQMQMAFLRQALHFLEQSYKNYTLMSVFANLQQAQLGGVPGTYNLVRSFLNIRLPAPIPGLQDGEVEGYPVWALIYYCMRCGDLMAAQQVVNRAQHQLGDFKNCFQEYVHSKDRRLSPTTENKLRLHYRRAVRASTDPYKRVVYCIIGRCDVTDNHSEVADKTEDYLWLKLSQVCFEDEANSSPQDRLTLPQFQKQLFEDYGESHFAVNQQPYLYFQVLFLTAQFEAAIAFLFRLERTRCHAVHVALALFELKLLLKSTGQSAQLLSLEPGDPQGVRHLNFIRLLMLYTRKFEPTDPREALQYFYFLRNEKDSQGESMFLRCVSELVIESREFDMLLGKLEKDGSRKPGAIDKFTRDTKTIINKVASVAENKGLFEEAAKLYDLAKNPDKVLELTNKLLSPVVSQISAPQSNRERLKNMALAIAERYKSQGVSAEKSINSTFYLLLDLITFFDEYHAGHVDLAFDVIERLKLVPLSQDSVEERVAAFRNFSDEIRHNLSEILLATMNILFTQYKRLKGSGPNTLGRPQRAQEDKDSVLRSQARALITFAGMIPYRMSGDTNARLVQMEVLMN</sequence>
<proteinExistence type="evidence at transcript level"/>
<dbReference type="EMBL" id="BC067327">
    <property type="protein sequence ID" value="AAH67327.1"/>
    <property type="molecule type" value="mRNA"/>
</dbReference>
<dbReference type="RefSeq" id="NP_998879.1">
    <property type="nucleotide sequence ID" value="NM_213714.1"/>
</dbReference>
<dbReference type="SMR" id="Q6NX12"/>
<dbReference type="FunCoup" id="Q6NX12">
    <property type="interactions" value="4456"/>
</dbReference>
<dbReference type="STRING" id="8364.ENSXETP00000013793"/>
<dbReference type="PaxDb" id="8364-ENSXETP00000039971"/>
<dbReference type="GeneID" id="407948"/>
<dbReference type="KEGG" id="xtr:407948"/>
<dbReference type="AGR" id="Xenbase:XB-GENE-5823109"/>
<dbReference type="CTD" id="9688"/>
<dbReference type="Xenbase" id="XB-GENE-5823109">
    <property type="gene designation" value="nup93"/>
</dbReference>
<dbReference type="eggNOG" id="KOG2168">
    <property type="taxonomic scope" value="Eukaryota"/>
</dbReference>
<dbReference type="InParanoid" id="Q6NX12"/>
<dbReference type="OMA" id="LLMCGQF"/>
<dbReference type="OrthoDB" id="1918363at2759"/>
<dbReference type="Reactome" id="R-XTR-170822">
    <property type="pathway name" value="Regulation of Glucokinase by Glucokinase Regulatory Protein"/>
</dbReference>
<dbReference type="Reactome" id="R-XTR-3108214">
    <property type="pathway name" value="SUMOylation of DNA damage response and repair proteins"/>
</dbReference>
<dbReference type="Reactome" id="R-XTR-3232142">
    <property type="pathway name" value="SUMOylation of ubiquitinylation proteins"/>
</dbReference>
<dbReference type="Reactome" id="R-XTR-3301854">
    <property type="pathway name" value="Nuclear Pore Complex (NPC) Disassembly"/>
</dbReference>
<dbReference type="Reactome" id="R-XTR-3371453">
    <property type="pathway name" value="Regulation of HSF1-mediated heat shock response"/>
</dbReference>
<dbReference type="Reactome" id="R-XTR-4085377">
    <property type="pathway name" value="SUMOylation of SUMOylation proteins"/>
</dbReference>
<dbReference type="Reactome" id="R-XTR-4570464">
    <property type="pathway name" value="SUMOylation of RNA binding proteins"/>
</dbReference>
<dbReference type="Reactome" id="R-XTR-4615885">
    <property type="pathway name" value="SUMOylation of DNA replication proteins"/>
</dbReference>
<dbReference type="Proteomes" id="UP000008143">
    <property type="component" value="Chromosome 4"/>
</dbReference>
<dbReference type="Bgee" id="ENSXETG00000018461">
    <property type="expression patterns" value="Expressed in testis and 13 other cell types or tissues"/>
</dbReference>
<dbReference type="GO" id="GO:0031965">
    <property type="term" value="C:nuclear membrane"/>
    <property type="evidence" value="ECO:0000250"/>
    <property type="project" value="UniProtKB"/>
</dbReference>
<dbReference type="GO" id="GO:0034399">
    <property type="term" value="C:nuclear periphery"/>
    <property type="evidence" value="ECO:0000250"/>
    <property type="project" value="UniProtKB"/>
</dbReference>
<dbReference type="GO" id="GO:0005643">
    <property type="term" value="C:nuclear pore"/>
    <property type="evidence" value="ECO:0000250"/>
    <property type="project" value="UniProtKB"/>
</dbReference>
<dbReference type="GO" id="GO:0017056">
    <property type="term" value="F:structural constituent of nuclear pore"/>
    <property type="evidence" value="ECO:0000250"/>
    <property type="project" value="UniProtKB"/>
</dbReference>
<dbReference type="GO" id="GO:0051028">
    <property type="term" value="P:mRNA transport"/>
    <property type="evidence" value="ECO:0007669"/>
    <property type="project" value="UniProtKB-KW"/>
</dbReference>
<dbReference type="GO" id="GO:0051292">
    <property type="term" value="P:nuclear pore complex assembly"/>
    <property type="evidence" value="ECO:0000250"/>
    <property type="project" value="UniProtKB"/>
</dbReference>
<dbReference type="GO" id="GO:0015031">
    <property type="term" value="P:protein transport"/>
    <property type="evidence" value="ECO:0007669"/>
    <property type="project" value="UniProtKB-KW"/>
</dbReference>
<dbReference type="InterPro" id="IPR007231">
    <property type="entry name" value="Nucleoporin_int_Nup93/Nic96"/>
</dbReference>
<dbReference type="PANTHER" id="PTHR11225:SF4">
    <property type="entry name" value="NUCLEAR PORE COMPLEX PROTEIN NUP93"/>
    <property type="match status" value="1"/>
</dbReference>
<dbReference type="PANTHER" id="PTHR11225">
    <property type="entry name" value="NUCLEAR PORE COMPLEX PROTEIN NUP93 NUCLEOPORIN NUP93 DEAD EYE PROTEIN"/>
    <property type="match status" value="1"/>
</dbReference>
<dbReference type="Pfam" id="PF04097">
    <property type="entry name" value="Nic96"/>
    <property type="match status" value="1"/>
</dbReference>
<gene>
    <name type="primary">nup93</name>
</gene>
<comment type="function">
    <text evidence="1">Plays a role in the nuclear pore complex (NPC) assembly and/or maintenance.</text>
</comment>
<comment type="subcellular location">
    <subcellularLocation>
        <location evidence="1">Nucleus membrane</location>
        <topology evidence="1">Peripheral membrane protein</topology>
    </subcellularLocation>
    <subcellularLocation>
        <location evidence="1">Nucleus</location>
        <location evidence="1">Nuclear pore complex</location>
    </subcellularLocation>
    <text evidence="1">Localizes at the nuclear basket and at or near the nuclear entry to the gated channel of the pore.</text>
</comment>
<comment type="similarity">
    <text evidence="2">Belongs to the nucleoporin interacting component (NIC) family.</text>
</comment>
<feature type="chain" id="PRO_0000356297" description="Nuclear pore complex protein Nup93">
    <location>
        <begin position="1"/>
        <end position="820"/>
    </location>
</feature>
<name>NUP93_XENTR</name>
<accession>Q6NX12</accession>
<reference key="1">
    <citation type="submission" date="2004-03" db="EMBL/GenBank/DDBJ databases">
        <authorList>
            <consortium name="NIH - Xenopus Gene Collection (XGC) project"/>
        </authorList>
    </citation>
    <scope>NUCLEOTIDE SEQUENCE [LARGE SCALE MRNA]</scope>
    <source>
        <tissue>Embryo</tissue>
    </source>
</reference>
<organism>
    <name type="scientific">Xenopus tropicalis</name>
    <name type="common">Western clawed frog</name>
    <name type="synonym">Silurana tropicalis</name>
    <dbReference type="NCBI Taxonomy" id="8364"/>
    <lineage>
        <taxon>Eukaryota</taxon>
        <taxon>Metazoa</taxon>
        <taxon>Chordata</taxon>
        <taxon>Craniata</taxon>
        <taxon>Vertebrata</taxon>
        <taxon>Euteleostomi</taxon>
        <taxon>Amphibia</taxon>
        <taxon>Batrachia</taxon>
        <taxon>Anura</taxon>
        <taxon>Pipoidea</taxon>
        <taxon>Pipidae</taxon>
        <taxon>Xenopodinae</taxon>
        <taxon>Xenopus</taxon>
        <taxon>Silurana</taxon>
    </lineage>
</organism>
<protein>
    <recommendedName>
        <fullName>Nuclear pore complex protein Nup93</fullName>
    </recommendedName>
    <alternativeName>
        <fullName>93 kDa nucleoporin</fullName>
    </alternativeName>
    <alternativeName>
        <fullName>Nucleoporin Nup93</fullName>
    </alternativeName>
</protein>
<keyword id="KW-0472">Membrane</keyword>
<keyword id="KW-0509">mRNA transport</keyword>
<keyword id="KW-0906">Nuclear pore complex</keyword>
<keyword id="KW-0539">Nucleus</keyword>
<keyword id="KW-0597">Phosphoprotein</keyword>
<keyword id="KW-0653">Protein transport</keyword>
<keyword id="KW-1185">Reference proteome</keyword>
<keyword id="KW-0811">Translocation</keyword>
<keyword id="KW-0813">Transport</keyword>
<evidence type="ECO:0000250" key="1"/>
<evidence type="ECO:0000305" key="2"/>